<evidence type="ECO:0000250" key="1">
    <source>
        <dbReference type="UniProtKB" id="P13856"/>
    </source>
</evidence>
<evidence type="ECO:0000250" key="2">
    <source>
        <dbReference type="UniProtKB" id="P20339"/>
    </source>
</evidence>
<evidence type="ECO:0000250" key="3">
    <source>
        <dbReference type="UniProtKB" id="P61020"/>
    </source>
</evidence>
<evidence type="ECO:0000269" key="4">
    <source>
    </source>
</evidence>
<evidence type="ECO:0000269" key="5">
    <source>
    </source>
</evidence>
<evidence type="ECO:0000269" key="6">
    <source>
    </source>
</evidence>
<evidence type="ECO:0000269" key="7">
    <source>
    </source>
</evidence>
<evidence type="ECO:0000303" key="8">
    <source>
    </source>
</evidence>
<evidence type="ECO:0000305" key="9"/>
<evidence type="ECO:0000305" key="10">
    <source>
    </source>
</evidence>
<evidence type="ECO:0000305" key="11">
    <source>
    </source>
</evidence>
<evidence type="ECO:0000312" key="12">
    <source>
        <dbReference type="EMBL" id="CAD52241.1"/>
    </source>
</evidence>
<evidence type="ECO:0000312" key="13">
    <source>
        <dbReference type="Proteomes" id="UP000001450"/>
    </source>
</evidence>
<organism evidence="13">
    <name type="scientific">Plasmodium falciparum (isolate 3D7)</name>
    <dbReference type="NCBI Taxonomy" id="36329"/>
    <lineage>
        <taxon>Eukaryota</taxon>
        <taxon>Sar</taxon>
        <taxon>Alveolata</taxon>
        <taxon>Apicomplexa</taxon>
        <taxon>Aconoidasida</taxon>
        <taxon>Haemosporida</taxon>
        <taxon>Plasmodiidae</taxon>
        <taxon>Plasmodium</taxon>
        <taxon>Plasmodium (Laverania)</taxon>
    </lineage>
</organism>
<accession>Q76NM7</accession>
<dbReference type="EC" id="3.6.5.2" evidence="2"/>
<dbReference type="EMBL" id="AL844509">
    <property type="protein sequence ID" value="CAD52241.1"/>
    <property type="molecule type" value="Genomic_DNA"/>
</dbReference>
<dbReference type="RefSeq" id="XP_001349834.1">
    <property type="nucleotide sequence ID" value="XM_001349798.1"/>
</dbReference>
<dbReference type="SMR" id="Q76NM7"/>
<dbReference type="STRING" id="36329.Q76NM7"/>
<dbReference type="iPTMnet" id="Q76NM7"/>
<dbReference type="PaxDb" id="5833-MAL13P1.51"/>
<dbReference type="EnsemblProtists" id="CAD52241">
    <property type="protein sequence ID" value="CAD52241"/>
    <property type="gene ID" value="PF3D7_1310600"/>
</dbReference>
<dbReference type="GeneID" id="813940"/>
<dbReference type="KEGG" id="pfa:PF3D7_1310600"/>
<dbReference type="VEuPathDB" id="PlasmoDB:PF3D7_1310600"/>
<dbReference type="HOGENOM" id="CLU_041217_10_2_1"/>
<dbReference type="InParanoid" id="Q76NM7"/>
<dbReference type="OMA" id="PTTRRCC"/>
<dbReference type="OrthoDB" id="63533at2759"/>
<dbReference type="PhylomeDB" id="Q76NM7"/>
<dbReference type="Proteomes" id="UP000001450">
    <property type="component" value="Chromosome 13"/>
</dbReference>
<dbReference type="GO" id="GO:0000421">
    <property type="term" value="C:autophagosome membrane"/>
    <property type="evidence" value="ECO:0000314"/>
    <property type="project" value="GeneDB"/>
</dbReference>
<dbReference type="GO" id="GO:0005769">
    <property type="term" value="C:early endosome"/>
    <property type="evidence" value="ECO:0000318"/>
    <property type="project" value="GO_Central"/>
</dbReference>
<dbReference type="GO" id="GO:0012505">
    <property type="term" value="C:endomembrane system"/>
    <property type="evidence" value="ECO:0000318"/>
    <property type="project" value="GO_Central"/>
</dbReference>
<dbReference type="GO" id="GO:0020020">
    <property type="term" value="C:food vacuole"/>
    <property type="evidence" value="ECO:0000314"/>
    <property type="project" value="UniProtKB"/>
</dbReference>
<dbReference type="GO" id="GO:0005886">
    <property type="term" value="C:plasma membrane"/>
    <property type="evidence" value="ECO:0000314"/>
    <property type="project" value="GeneDB"/>
</dbReference>
<dbReference type="GO" id="GO:0003925">
    <property type="term" value="F:G protein activity"/>
    <property type="evidence" value="ECO:0007669"/>
    <property type="project" value="UniProtKB-EC"/>
</dbReference>
<dbReference type="GO" id="GO:0005525">
    <property type="term" value="F:GTP binding"/>
    <property type="evidence" value="ECO:0007669"/>
    <property type="project" value="UniProtKB-KW"/>
</dbReference>
<dbReference type="GO" id="GO:0003924">
    <property type="term" value="F:GTPase activity"/>
    <property type="evidence" value="ECO:0000318"/>
    <property type="project" value="GO_Central"/>
</dbReference>
<dbReference type="GO" id="GO:0006886">
    <property type="term" value="P:intracellular protein transport"/>
    <property type="evidence" value="ECO:0000318"/>
    <property type="project" value="GO_Central"/>
</dbReference>
<dbReference type="CDD" id="cd00154">
    <property type="entry name" value="Rab"/>
    <property type="match status" value="1"/>
</dbReference>
<dbReference type="FunFam" id="3.40.50.300:FF:001457">
    <property type="entry name" value="Ras-related protein Rab-5B"/>
    <property type="match status" value="1"/>
</dbReference>
<dbReference type="Gene3D" id="3.40.50.300">
    <property type="entry name" value="P-loop containing nucleotide triphosphate hydrolases"/>
    <property type="match status" value="1"/>
</dbReference>
<dbReference type="InterPro" id="IPR027417">
    <property type="entry name" value="P-loop_NTPase"/>
</dbReference>
<dbReference type="InterPro" id="IPR025662">
    <property type="entry name" value="Sigma_54_int_dom_ATP-bd_1"/>
</dbReference>
<dbReference type="InterPro" id="IPR005225">
    <property type="entry name" value="Small_GTP-bd"/>
</dbReference>
<dbReference type="InterPro" id="IPR001806">
    <property type="entry name" value="Small_GTPase"/>
</dbReference>
<dbReference type="NCBIfam" id="TIGR00231">
    <property type="entry name" value="small_GTP"/>
    <property type="match status" value="1"/>
</dbReference>
<dbReference type="PANTHER" id="PTHR47978">
    <property type="match status" value="1"/>
</dbReference>
<dbReference type="Pfam" id="PF00071">
    <property type="entry name" value="Ras"/>
    <property type="match status" value="1"/>
</dbReference>
<dbReference type="PRINTS" id="PR00449">
    <property type="entry name" value="RASTRNSFRMNG"/>
</dbReference>
<dbReference type="SMART" id="SM00177">
    <property type="entry name" value="ARF"/>
    <property type="match status" value="1"/>
</dbReference>
<dbReference type="SMART" id="SM00175">
    <property type="entry name" value="RAB"/>
    <property type="match status" value="1"/>
</dbReference>
<dbReference type="SMART" id="SM00173">
    <property type="entry name" value="RAS"/>
    <property type="match status" value="1"/>
</dbReference>
<dbReference type="SMART" id="SM00174">
    <property type="entry name" value="RHO"/>
    <property type="match status" value="1"/>
</dbReference>
<dbReference type="SUPFAM" id="SSF52540">
    <property type="entry name" value="P-loop containing nucleoside triphosphate hydrolases"/>
    <property type="match status" value="1"/>
</dbReference>
<dbReference type="PROSITE" id="PS51419">
    <property type="entry name" value="RAB"/>
    <property type="match status" value="1"/>
</dbReference>
<dbReference type="PROSITE" id="PS00675">
    <property type="entry name" value="SIGMA54_INTERACT_1"/>
    <property type="match status" value="1"/>
</dbReference>
<reference evidence="13" key="1">
    <citation type="journal article" date="2002" name="Nature">
        <title>Genome sequence of the human malaria parasite Plasmodium falciparum.</title>
        <authorList>
            <person name="Gardner M.J."/>
            <person name="Hall N."/>
            <person name="Fung E."/>
            <person name="White O."/>
            <person name="Berriman M."/>
            <person name="Hyman R.W."/>
            <person name="Carlton J.M."/>
            <person name="Pain A."/>
            <person name="Nelson K.E."/>
            <person name="Bowman S."/>
            <person name="Paulsen I.T."/>
            <person name="James K.D."/>
            <person name="Eisen J.A."/>
            <person name="Rutherford K.M."/>
            <person name="Salzberg S.L."/>
            <person name="Craig A."/>
            <person name="Kyes S."/>
            <person name="Chan M.-S."/>
            <person name="Nene V."/>
            <person name="Shallom S.J."/>
            <person name="Suh B."/>
            <person name="Peterson J."/>
            <person name="Angiuoli S."/>
            <person name="Pertea M."/>
            <person name="Allen J."/>
            <person name="Selengut J."/>
            <person name="Haft D."/>
            <person name="Mather M.W."/>
            <person name="Vaidya A.B."/>
            <person name="Martin D.M.A."/>
            <person name="Fairlamb A.H."/>
            <person name="Fraunholz M.J."/>
            <person name="Roos D.S."/>
            <person name="Ralph S.A."/>
            <person name="McFadden G.I."/>
            <person name="Cummings L.M."/>
            <person name="Subramanian G.M."/>
            <person name="Mungall C."/>
            <person name="Venter J.C."/>
            <person name="Carucci D.J."/>
            <person name="Hoffman S.L."/>
            <person name="Newbold C."/>
            <person name="Davis R.W."/>
            <person name="Fraser C.M."/>
            <person name="Barrell B.G."/>
        </authorList>
    </citation>
    <scope>NUCLEOTIDE SEQUENCE [LARGE SCALE GENOMIC DNA]</scope>
    <source>
        <strain evidence="13">3D7</strain>
    </source>
</reference>
<reference evidence="13" key="2">
    <citation type="journal article" date="2002" name="Nature">
        <title>Sequence of Plasmodium falciparum chromosomes 1, 3-9 and 13.</title>
        <authorList>
            <person name="Hall N."/>
            <person name="Pain A."/>
            <person name="Berriman M."/>
            <person name="Churcher C.M."/>
            <person name="Harris B."/>
            <person name="Harris D."/>
            <person name="Mungall K.L."/>
            <person name="Bowman S."/>
            <person name="Atkin R."/>
            <person name="Baker S."/>
            <person name="Barron A."/>
            <person name="Brooks K."/>
            <person name="Buckee C.O."/>
            <person name="Burrows C."/>
            <person name="Cherevach I."/>
            <person name="Chillingworth C."/>
            <person name="Chillingworth T."/>
            <person name="Christodoulou Z."/>
            <person name="Clark L."/>
            <person name="Clark R."/>
            <person name="Corton C."/>
            <person name="Cronin A."/>
            <person name="Davies R.M."/>
            <person name="Davis P."/>
            <person name="Dear P."/>
            <person name="Dearden F."/>
            <person name="Doggett J."/>
            <person name="Feltwell T."/>
            <person name="Goble A."/>
            <person name="Goodhead I."/>
            <person name="Gwilliam R."/>
            <person name="Hamlin N."/>
            <person name="Hance Z."/>
            <person name="Harper D."/>
            <person name="Hauser H."/>
            <person name="Hornsby T."/>
            <person name="Holroyd S."/>
            <person name="Horrocks P."/>
            <person name="Humphray S."/>
            <person name="Jagels K."/>
            <person name="James K.D."/>
            <person name="Johnson D."/>
            <person name="Kerhornou A."/>
            <person name="Knights A."/>
            <person name="Konfortov B."/>
            <person name="Kyes S."/>
            <person name="Larke N."/>
            <person name="Lawson D."/>
            <person name="Lennard N."/>
            <person name="Line A."/>
            <person name="Maddison M."/>
            <person name="Mclean J."/>
            <person name="Mooney P."/>
            <person name="Moule S."/>
            <person name="Murphy L."/>
            <person name="Oliver K."/>
            <person name="Ormond D."/>
            <person name="Price C."/>
            <person name="Quail M.A."/>
            <person name="Rabbinowitsch E."/>
            <person name="Rajandream M.A."/>
            <person name="Rutter S."/>
            <person name="Rutherford K.M."/>
            <person name="Sanders M."/>
            <person name="Simmonds M."/>
            <person name="Seeger K."/>
            <person name="Sharp S."/>
            <person name="Smith R."/>
            <person name="Squares R."/>
            <person name="Squares S."/>
            <person name="Stevens K."/>
            <person name="Taylor K."/>
            <person name="Tivey A."/>
            <person name="Unwin L."/>
            <person name="Whitehead S."/>
            <person name="Woodward J.R."/>
            <person name="Sulston J.E."/>
            <person name="Craig A."/>
            <person name="Newbold C."/>
            <person name="Barrell B.G."/>
        </authorList>
    </citation>
    <scope>NUCLEOTIDE SEQUENCE [LARGE SCALE GENOMIC DNA]</scope>
    <source>
        <strain evidence="13">3D7</strain>
    </source>
</reference>
<reference key="3">
    <citation type="journal article" date="2012" name="Biol. Cell">
        <title>Construction of a Plasmodium falciparum Rab-interactome identifies CK1 and PKA as Rab-effector kinases in malaria parasites.</title>
        <authorList>
            <person name="Rached F.B."/>
            <person name="Ndjembo-Ezougou C."/>
            <person name="Chandran S."/>
            <person name="Talabani H."/>
            <person name="Yera H."/>
            <person name="Dandavate V."/>
            <person name="Bourdoncle P."/>
            <person name="Meissner M."/>
            <person name="Tatu U."/>
            <person name="Langsley G."/>
        </authorList>
    </citation>
    <scope>INTERACTION WITH CK1</scope>
</reference>
<reference evidence="9" key="4">
    <citation type="journal article" date="2014" name="PLoS ONE">
        <title>Plasmodium falciparum Rab5B is an N-terminally myristoylated Rab GTPase that is targeted to the parasite's plasma and food vacuole membranes.</title>
        <authorList>
            <person name="Ezougou C.N."/>
            <person name="Ben-Rached F."/>
            <person name="Moss D.K."/>
            <person name="Lin J.W."/>
            <person name="Black S."/>
            <person name="Knuepfer E."/>
            <person name="Green J.L."/>
            <person name="Khan S.M."/>
            <person name="Mukhopadhyay A."/>
            <person name="Janse C.J."/>
            <person name="Coppens I."/>
            <person name="Yera H."/>
            <person name="Holder A.A."/>
            <person name="Langsley G."/>
        </authorList>
    </citation>
    <scope>SUBCELLULAR LOCATION</scope>
    <scope>DEVELOPMENTAL STAGE</scope>
    <scope>MYRISTOYLATION AT GLY-2</scope>
    <scope>MUTAGENESIS OF GLY-2 AND CYS-3</scope>
</reference>
<reference evidence="9" key="5">
    <citation type="journal article" date="2016" name="Malar. J.">
        <title>Plasmodium Rab5b is secreted to the cytoplasmic face of the tubovesicular network in infected red blood cells together with N-acylated adenylate kinase 2.</title>
        <authorList>
            <person name="Ebine K."/>
            <person name="Hirai M."/>
            <person name="Sakaguchi M."/>
            <person name="Yahata K."/>
            <person name="Kaneko O."/>
            <person name="Saito-Nakano Y."/>
        </authorList>
    </citation>
    <scope>FUNCTION</scope>
    <scope>SUBCELLULAR LOCATION</scope>
</reference>
<reference evidence="9" key="6">
    <citation type="journal article" date="2020" name="Front. Cell. Infect. Microbiol.">
        <title>Rab5b-Associated Arf1 GTPase Regulates Export of N-Myristoylated Adenylate Kinase 2 From the Endoplasmic Reticulum in Plasmodium falciparum.</title>
        <authorList>
            <person name="Taku I."/>
            <person name="Hirai T."/>
            <person name="Makiuchi T."/>
            <person name="Shinzawa N."/>
            <person name="Iwanaga S."/>
            <person name="Annoura T."/>
            <person name="Nagamune K."/>
            <person name="Nozaki T."/>
            <person name="Saito-Nakano Y."/>
        </authorList>
    </citation>
    <scope>INTERACTION WITH ARF1</scope>
</reference>
<sequence>MGCSSSTERLTSTKNINIVTSPAQQQKKNAQDTKVKIVLLGDSGVGKSSIALYLCHGRFSEKHQVTIGAAFLHHNIELKNGATMKLHIWDTGGQERFRSMAPLYYRDAYGAVVVYDSNNVESFDSLKYWINEIKSNGPRNCCIMVVANKKDLPQKLNSEMVMKFCEQENVSFIECSAKTGENITTLFEKLASRIYSRFKEVLYYNNP</sequence>
<proteinExistence type="evidence at protein level"/>
<name>RAB5B_PLAF7</name>
<gene>
    <name evidence="8" type="primary">RAB5b</name>
    <name evidence="12" type="ORF">PF3D7_1310600</name>
</gene>
<feature type="initiator methionine" description="Removed" evidence="5">
    <location>
        <position position="1"/>
    </location>
</feature>
<feature type="chain" id="PRO_0000456356" description="Ras-related protein Rab-5B">
    <location>
        <begin position="2"/>
        <end position="207"/>
    </location>
</feature>
<feature type="short sequence motif" description="Effector region" evidence="9">
    <location>
        <begin position="63"/>
        <end position="71"/>
    </location>
</feature>
<feature type="binding site" evidence="3">
    <location>
        <begin position="41"/>
        <end position="49"/>
    </location>
    <ligand>
        <name>GTP</name>
        <dbReference type="ChEBI" id="CHEBI:37565"/>
    </ligand>
</feature>
<feature type="binding site" evidence="3">
    <location>
        <begin position="60"/>
        <end position="66"/>
    </location>
    <ligand>
        <name>GTP</name>
        <dbReference type="ChEBI" id="CHEBI:37565"/>
    </ligand>
</feature>
<feature type="binding site" evidence="2">
    <location>
        <begin position="90"/>
        <end position="94"/>
    </location>
    <ligand>
        <name>GTP</name>
        <dbReference type="ChEBI" id="CHEBI:37565"/>
    </ligand>
</feature>
<feature type="binding site" evidence="3">
    <location>
        <begin position="148"/>
        <end position="151"/>
    </location>
    <ligand>
        <name>GTP</name>
        <dbReference type="ChEBI" id="CHEBI:37565"/>
    </ligand>
</feature>
<feature type="binding site" evidence="3">
    <location>
        <begin position="176"/>
        <end position="178"/>
    </location>
    <ligand>
        <name>GTP</name>
        <dbReference type="ChEBI" id="CHEBI:37565"/>
    </ligand>
</feature>
<feature type="lipid moiety-binding region" description="N-myristoyl glycine" evidence="5">
    <location>
        <position position="2"/>
    </location>
</feature>
<feature type="mutagenesis site" description="Loss of myristoylation. Loss of myristoylation; when associated with A-3." evidence="5">
    <original>G</original>
    <variation>A</variation>
    <location>
        <position position="2"/>
    </location>
</feature>
<feature type="mutagenesis site" description="Loss of myristoylation; when associated with A-2." evidence="5">
    <original>C</original>
    <variation>A</variation>
    <location>
        <position position="3"/>
    </location>
</feature>
<keyword id="KW-1003">Cell membrane</keyword>
<keyword id="KW-0342">GTP-binding</keyword>
<keyword id="KW-0378">Hydrolase</keyword>
<keyword id="KW-0449">Lipoprotein</keyword>
<keyword id="KW-0472">Membrane</keyword>
<keyword id="KW-0519">Myristate</keyword>
<keyword id="KW-0547">Nucleotide-binding</keyword>
<keyword id="KW-0653">Protein transport</keyword>
<keyword id="KW-1185">Reference proteome</keyword>
<keyword id="KW-0813">Transport</keyword>
<keyword id="KW-0926">Vacuole</keyword>
<comment type="function">
    <text evidence="6 11">Small GTPase which regulates vesicle trafficking between organelles (Probable). May be involved in the trafficking of the N-myristoylated AK2 from the endoplasmic reticulum to the parasitophorous vacuole membrane (PubMed:27316546).</text>
</comment>
<comment type="catalytic activity">
    <reaction evidence="2">
        <text>GTP + H2O = GDP + phosphate + H(+)</text>
        <dbReference type="Rhea" id="RHEA:19669"/>
        <dbReference type="ChEBI" id="CHEBI:15377"/>
        <dbReference type="ChEBI" id="CHEBI:15378"/>
        <dbReference type="ChEBI" id="CHEBI:37565"/>
        <dbReference type="ChEBI" id="CHEBI:43474"/>
        <dbReference type="ChEBI" id="CHEBI:58189"/>
        <dbReference type="EC" id="3.6.5.2"/>
    </reaction>
</comment>
<comment type="activity regulation">
    <text evidence="1">Alternates between an inactive GDP-bound form and an active GTP-bound form (By similarity). Activated by guanine nucleotide-exchange factors (GEFs) and inactivated by GTPase-activating proteins (GAPs) (By similarity).</text>
</comment>
<comment type="subunit">
    <text evidence="4 7">Interacts with CK1 (PubMed:22188458). May interact with ARF1 (PubMed:33604307).</text>
</comment>
<comment type="subcellular location">
    <subcellularLocation>
        <location evidence="5">Cell membrane</location>
        <topology evidence="5">Lipid-anchor</topology>
        <orientation evidence="9">Cytoplasmic side</orientation>
    </subcellularLocation>
    <subcellularLocation>
        <location evidence="5">Vacuole membrane</location>
        <topology evidence="5">Lipid-anchor</topology>
        <orientation evidence="9">Cytoplasmic side</orientation>
    </subcellularLocation>
    <subcellularLocation>
        <location evidence="5">Vesicle</location>
    </subcellularLocation>
    <text evidence="6">May localize to the endoplasmic reticulum and to the parasitophorous vacuole membrane.</text>
</comment>
<comment type="developmental stage">
    <text evidence="5">Expressed during the asexual blood stage, including the trophozoite and schizont stages (at protein level).</text>
</comment>
<comment type="PTM">
    <text evidence="5">Myristoylation is required for cell membrane and food vacuole membrane localization.</text>
</comment>
<comment type="PTM">
    <text evidence="10">May be palmitoylated on Cys-3.</text>
</comment>
<comment type="PTM">
    <text evidence="10">Lacks the C-terminal cysteine motifs subject to isoprenylation present in mammalian RAB5B homolog.</text>
</comment>
<comment type="similarity">
    <text evidence="9">Belongs to the small GTPase superfamily. Rab family.</text>
</comment>
<protein>
    <recommendedName>
        <fullName evidence="9">Ras-related protein Rab-5B</fullName>
        <shortName evidence="8">PfRab5B</shortName>
        <ecNumber evidence="2">3.6.5.2</ecNumber>
    </recommendedName>
</protein>